<evidence type="ECO:0000250" key="1">
    <source>
        <dbReference type="UniProtKB" id="P53867"/>
    </source>
</evidence>
<evidence type="ECO:0000250" key="2">
    <source>
        <dbReference type="UniProtKB" id="Q9Y4P1"/>
    </source>
</evidence>
<evidence type="ECO:0000256" key="3">
    <source>
        <dbReference type="SAM" id="MobiDB-lite"/>
    </source>
</evidence>
<evidence type="ECO:0000305" key="4"/>
<comment type="function">
    <text evidence="1">Cysteine protease that plays a key role in cytoplasm to vacuole transport (Cvt) and autophagy by mediating both proteolytic activation and delipidation of ATG8. Required for selective autophagic degradation of the nucleus (nucleophagy) as well as for mitophagy which contributes to regulate mitochondrial quantity and quality by eliminating the mitochondria to a basal level to fulfill cellular energy requirements and preventing excess ROS production. The protease activity is required for proteolytic activation of ATG8: cleaves the C-terminal amino acid of ATG8 to reveal a C-terminal glycine. ATG8 ubiquitin-like activity requires the exposure of the glycine at the C-terminus for its conjugation to phosphatidylethanolamine (PE) and its insertion to membranes, which is necessary for autophagy. The ATG8-PE conjugate mediates tethering between adjacent membranes and stimulates membrane hemifusion, leading to expansion of the autophagosomal membrane during autophagy. In addition to the protease activity, also catalyzes deconjugation of PE-conjugated forms of ATG8 during macroautophagy: ATG8 delipidation is required to release the protein from membranes, which facilitates multiple events during macroautophagy, and especially for efficient autophagosome biogenesis, the assembly of ATG9-containing tubulovesicular clusters into phagophores/autophagosomes, and for the disassembly of PAS-associated ATG components. ATG8 delipidation by ATG4 also recycles ATG8-PE generated on inappropriate membranes to maintain a reservoir of unlipidated ATG8 that is required for autophagosome formation at the PAS.</text>
</comment>
<comment type="catalytic activity">
    <reaction evidence="1">
        <text>[protein]-C-terminal L-amino acid-glycyl-phosphatidylethanolamide + H2O = [protein]-C-terminal L-amino acid-glycine + a 1,2-diacyl-sn-glycero-3-phosphoethanolamine</text>
        <dbReference type="Rhea" id="RHEA:67548"/>
        <dbReference type="Rhea" id="RHEA-COMP:17323"/>
        <dbReference type="Rhea" id="RHEA-COMP:17324"/>
        <dbReference type="ChEBI" id="CHEBI:15377"/>
        <dbReference type="ChEBI" id="CHEBI:64612"/>
        <dbReference type="ChEBI" id="CHEBI:172940"/>
        <dbReference type="ChEBI" id="CHEBI:172941"/>
    </reaction>
    <physiologicalReaction direction="left-to-right" evidence="1">
        <dbReference type="Rhea" id="RHEA:67549"/>
    </physiologicalReaction>
</comment>
<comment type="subcellular location">
    <subcellularLocation>
        <location evidence="1">Cytoplasm</location>
    </subcellularLocation>
    <subcellularLocation>
        <location evidence="1">Nucleus</location>
    </subcellularLocation>
    <subcellularLocation>
        <location evidence="1">Preautophagosomal structure</location>
    </subcellularLocation>
</comment>
<comment type="similarity">
    <text evidence="4">Belongs to the peptidase C54 family.</text>
</comment>
<keyword id="KW-0072">Autophagy</keyword>
<keyword id="KW-0963">Cytoplasm</keyword>
<keyword id="KW-0378">Hydrolase</keyword>
<keyword id="KW-0539">Nucleus</keyword>
<keyword id="KW-0645">Protease</keyword>
<keyword id="KW-0653">Protein transport</keyword>
<keyword id="KW-1185">Reference proteome</keyword>
<keyword id="KW-0788">Thiol protease</keyword>
<keyword id="KW-0813">Transport</keyword>
<accession>P0CQ10</accession>
<accession>Q55JY1</accession>
<accession>Q5K9L9</accession>
<feature type="chain" id="PRO_0000215860" description="Cysteine protease ATG4">
    <location>
        <begin position="1"/>
        <end position="1193"/>
    </location>
</feature>
<feature type="region of interest" description="Disordered" evidence="3">
    <location>
        <begin position="23"/>
        <end position="284"/>
    </location>
</feature>
<feature type="region of interest" description="Disordered" evidence="3">
    <location>
        <begin position="358"/>
        <end position="474"/>
    </location>
</feature>
<feature type="region of interest" description="Disordered" evidence="3">
    <location>
        <begin position="807"/>
        <end position="869"/>
    </location>
</feature>
<feature type="region of interest" description="Disordered" evidence="3">
    <location>
        <begin position="899"/>
        <end position="924"/>
    </location>
</feature>
<feature type="region of interest" description="Disordered" evidence="3">
    <location>
        <begin position="1000"/>
        <end position="1171"/>
    </location>
</feature>
<feature type="compositionally biased region" description="Pro residues" evidence="3">
    <location>
        <begin position="35"/>
        <end position="49"/>
    </location>
</feature>
<feature type="compositionally biased region" description="Basic residues" evidence="3">
    <location>
        <begin position="50"/>
        <end position="59"/>
    </location>
</feature>
<feature type="compositionally biased region" description="Basic and acidic residues" evidence="3">
    <location>
        <begin position="60"/>
        <end position="72"/>
    </location>
</feature>
<feature type="compositionally biased region" description="Basic and acidic residues" evidence="3">
    <location>
        <begin position="117"/>
        <end position="127"/>
    </location>
</feature>
<feature type="compositionally biased region" description="Basic and acidic residues" evidence="3">
    <location>
        <begin position="140"/>
        <end position="153"/>
    </location>
</feature>
<feature type="compositionally biased region" description="Low complexity" evidence="3">
    <location>
        <begin position="170"/>
        <end position="185"/>
    </location>
</feature>
<feature type="compositionally biased region" description="Polar residues" evidence="3">
    <location>
        <begin position="186"/>
        <end position="205"/>
    </location>
</feature>
<feature type="compositionally biased region" description="Low complexity" evidence="3">
    <location>
        <begin position="227"/>
        <end position="238"/>
    </location>
</feature>
<feature type="compositionally biased region" description="Polar residues" evidence="3">
    <location>
        <begin position="253"/>
        <end position="262"/>
    </location>
</feature>
<feature type="compositionally biased region" description="Polar residues" evidence="3">
    <location>
        <begin position="270"/>
        <end position="284"/>
    </location>
</feature>
<feature type="compositionally biased region" description="Polar residues" evidence="3">
    <location>
        <begin position="389"/>
        <end position="447"/>
    </location>
</feature>
<feature type="compositionally biased region" description="Low complexity" evidence="3">
    <location>
        <begin position="835"/>
        <end position="846"/>
    </location>
</feature>
<feature type="compositionally biased region" description="Acidic residues" evidence="3">
    <location>
        <begin position="1004"/>
        <end position="1029"/>
    </location>
</feature>
<feature type="compositionally biased region" description="Acidic residues" evidence="3">
    <location>
        <begin position="1070"/>
        <end position="1084"/>
    </location>
</feature>
<feature type="compositionally biased region" description="Basic and acidic residues" evidence="3">
    <location>
        <begin position="1097"/>
        <end position="1112"/>
    </location>
</feature>
<feature type="compositionally biased region" description="Basic and acidic residues" evidence="3">
    <location>
        <begin position="1152"/>
        <end position="1164"/>
    </location>
</feature>
<feature type="active site" description="Nucleophile" evidence="2">
    <location>
        <position position="570"/>
    </location>
</feature>
<feature type="active site" evidence="2">
    <location>
        <position position="789"/>
    </location>
</feature>
<feature type="active site" evidence="2">
    <location>
        <position position="791"/>
    </location>
</feature>
<reference key="1">
    <citation type="journal article" date="2005" name="Science">
        <title>The genome of the basidiomycetous yeast and human pathogen Cryptococcus neoformans.</title>
        <authorList>
            <person name="Loftus B.J."/>
            <person name="Fung E."/>
            <person name="Roncaglia P."/>
            <person name="Rowley D."/>
            <person name="Amedeo P."/>
            <person name="Bruno D."/>
            <person name="Vamathevan J."/>
            <person name="Miranda M."/>
            <person name="Anderson I.J."/>
            <person name="Fraser J.A."/>
            <person name="Allen J.E."/>
            <person name="Bosdet I.E."/>
            <person name="Brent M.R."/>
            <person name="Chiu R."/>
            <person name="Doering T.L."/>
            <person name="Donlin M.J."/>
            <person name="D'Souza C.A."/>
            <person name="Fox D.S."/>
            <person name="Grinberg V."/>
            <person name="Fu J."/>
            <person name="Fukushima M."/>
            <person name="Haas B.J."/>
            <person name="Huang J.C."/>
            <person name="Janbon G."/>
            <person name="Jones S.J.M."/>
            <person name="Koo H.L."/>
            <person name="Krzywinski M.I."/>
            <person name="Kwon-Chung K.J."/>
            <person name="Lengeler K.B."/>
            <person name="Maiti R."/>
            <person name="Marra M.A."/>
            <person name="Marra R.E."/>
            <person name="Mathewson C.A."/>
            <person name="Mitchell T.G."/>
            <person name="Pertea M."/>
            <person name="Riggs F.R."/>
            <person name="Salzberg S.L."/>
            <person name="Schein J.E."/>
            <person name="Shvartsbeyn A."/>
            <person name="Shin H."/>
            <person name="Shumway M."/>
            <person name="Specht C.A."/>
            <person name="Suh B.B."/>
            <person name="Tenney A."/>
            <person name="Utterback T.R."/>
            <person name="Wickes B.L."/>
            <person name="Wortman J.R."/>
            <person name="Wye N.H."/>
            <person name="Kronstad J.W."/>
            <person name="Lodge J.K."/>
            <person name="Heitman J."/>
            <person name="Davis R.W."/>
            <person name="Fraser C.M."/>
            <person name="Hyman R.W."/>
        </authorList>
    </citation>
    <scope>NUCLEOTIDE SEQUENCE [LARGE SCALE GENOMIC DNA]</scope>
    <source>
        <strain>JEC21 / ATCC MYA-565</strain>
    </source>
</reference>
<name>ATG4_CRYNJ</name>
<dbReference type="EC" id="3.4.22.-"/>
<dbReference type="EMBL" id="AE017351">
    <property type="protein sequence ID" value="AAW46309.1"/>
    <property type="molecule type" value="Genomic_DNA"/>
</dbReference>
<dbReference type="RefSeq" id="XP_567826.1">
    <property type="nucleotide sequence ID" value="XM_567826.1"/>
</dbReference>
<dbReference type="SMR" id="P0CQ10"/>
<dbReference type="STRING" id="214684.P0CQ10"/>
<dbReference type="PaxDb" id="214684-P0CQ10"/>
<dbReference type="EnsemblFungi" id="AAW46309">
    <property type="protein sequence ID" value="AAW46309"/>
    <property type="gene ID" value="CNK01520"/>
</dbReference>
<dbReference type="GeneID" id="3254616"/>
<dbReference type="KEGG" id="cne:CNK01520"/>
<dbReference type="VEuPathDB" id="FungiDB:CNK01520"/>
<dbReference type="eggNOG" id="KOG2674">
    <property type="taxonomic scope" value="Eukaryota"/>
</dbReference>
<dbReference type="HOGENOM" id="CLU_005225_0_0_1"/>
<dbReference type="InParanoid" id="P0CQ10"/>
<dbReference type="OMA" id="RVWCTYR"/>
<dbReference type="OrthoDB" id="2960936at2759"/>
<dbReference type="Proteomes" id="UP000002149">
    <property type="component" value="Chromosome 11"/>
</dbReference>
<dbReference type="GO" id="GO:0005737">
    <property type="term" value="C:cytoplasm"/>
    <property type="evidence" value="ECO:0000318"/>
    <property type="project" value="GO_Central"/>
</dbReference>
<dbReference type="GO" id="GO:0005634">
    <property type="term" value="C:nucleus"/>
    <property type="evidence" value="ECO:0007669"/>
    <property type="project" value="UniProtKB-SubCell"/>
</dbReference>
<dbReference type="GO" id="GO:0000407">
    <property type="term" value="C:phagophore assembly site"/>
    <property type="evidence" value="ECO:0007669"/>
    <property type="project" value="UniProtKB-SubCell"/>
</dbReference>
<dbReference type="GO" id="GO:0004197">
    <property type="term" value="F:cysteine-type endopeptidase activity"/>
    <property type="evidence" value="ECO:0000318"/>
    <property type="project" value="GO_Central"/>
</dbReference>
<dbReference type="GO" id="GO:0019786">
    <property type="term" value="F:protein-phosphatidylethanolamide deconjugating activity"/>
    <property type="evidence" value="ECO:0000318"/>
    <property type="project" value="GO_Central"/>
</dbReference>
<dbReference type="GO" id="GO:0035973">
    <property type="term" value="P:aggrephagy"/>
    <property type="evidence" value="ECO:0000318"/>
    <property type="project" value="GO_Central"/>
</dbReference>
<dbReference type="GO" id="GO:0000045">
    <property type="term" value="P:autophagosome assembly"/>
    <property type="evidence" value="ECO:0000318"/>
    <property type="project" value="GO_Central"/>
</dbReference>
<dbReference type="GO" id="GO:0000423">
    <property type="term" value="P:mitophagy"/>
    <property type="evidence" value="ECO:0000318"/>
    <property type="project" value="GO_Central"/>
</dbReference>
<dbReference type="GO" id="GO:0034727">
    <property type="term" value="P:piecemeal microautophagy of the nucleus"/>
    <property type="evidence" value="ECO:0000318"/>
    <property type="project" value="GO_Central"/>
</dbReference>
<dbReference type="GO" id="GO:0016485">
    <property type="term" value="P:protein processing"/>
    <property type="evidence" value="ECO:0000318"/>
    <property type="project" value="GO_Central"/>
</dbReference>
<dbReference type="GO" id="GO:0015031">
    <property type="term" value="P:protein transport"/>
    <property type="evidence" value="ECO:0007669"/>
    <property type="project" value="UniProtKB-KW"/>
</dbReference>
<dbReference type="InterPro" id="IPR038765">
    <property type="entry name" value="Papain-like_cys_pep_sf"/>
</dbReference>
<dbReference type="InterPro" id="IPR005078">
    <property type="entry name" value="Peptidase_C54"/>
</dbReference>
<dbReference type="InterPro" id="IPR046792">
    <property type="entry name" value="Peptidase_C54_cat"/>
</dbReference>
<dbReference type="PANTHER" id="PTHR22624:SF49">
    <property type="entry name" value="CYSTEINE PROTEASE"/>
    <property type="match status" value="1"/>
</dbReference>
<dbReference type="PANTHER" id="PTHR22624">
    <property type="entry name" value="CYSTEINE PROTEASE ATG4"/>
    <property type="match status" value="1"/>
</dbReference>
<dbReference type="Pfam" id="PF03416">
    <property type="entry name" value="Peptidase_C54"/>
    <property type="match status" value="2"/>
</dbReference>
<dbReference type="SUPFAM" id="SSF54001">
    <property type="entry name" value="Cysteine proteinases"/>
    <property type="match status" value="2"/>
</dbReference>
<proteinExistence type="inferred from homology"/>
<organism>
    <name type="scientific">Cryptococcus neoformans var. neoformans serotype D (strain JEC21 / ATCC MYA-565)</name>
    <name type="common">Filobasidiella neoformans</name>
    <dbReference type="NCBI Taxonomy" id="214684"/>
    <lineage>
        <taxon>Eukaryota</taxon>
        <taxon>Fungi</taxon>
        <taxon>Dikarya</taxon>
        <taxon>Basidiomycota</taxon>
        <taxon>Agaricomycotina</taxon>
        <taxon>Tremellomycetes</taxon>
        <taxon>Tremellales</taxon>
        <taxon>Cryptococcaceae</taxon>
        <taxon>Cryptococcus</taxon>
        <taxon>Cryptococcus neoformans species complex</taxon>
    </lineage>
</organism>
<protein>
    <recommendedName>
        <fullName>Cysteine protease ATG4</fullName>
        <ecNumber>3.4.22.-</ecNumber>
    </recommendedName>
    <alternativeName>
        <fullName>Autophagy-related protein 4</fullName>
    </alternativeName>
</protein>
<gene>
    <name type="primary">ATG4</name>
    <name type="ordered locus">CNK01520</name>
</gene>
<sequence length="1193" mass="130136">MSSPTSTSPKSSFVFSPTSFPHAAIASNNVRPRTNLPPPPPPDRIPPPKGRSHQQKFKILRKEKDKDRRQPIDLEDDWTIEDVTVNGDGVEQESQYLDDLQPEENELKPGPRFLEMANREEKKEKTSKSRGLVKKTSRLFGRDKDKDRGKPEEPAVTGSSSSTLAAMRQSSSTSTDSTTSRSITSAFTRQNSIQSRRSPRTSFGQAHSRRASQDSQMSWPAPRSIRSSTTSHDPSSDPQNSASSTGVPIPQRQGASMSSLSRYSLPHPNGGTSRSPDTFPNKMSTWFSHLLPVSSGSPPSSSYETSSSIRKQSSVAASLFNAARQKAVDGVRHLLDSEAQPDKCMDTIWVRGVAHPGWRPITPENSTSNLPALEPGGSGGGVEDRRASLSMNGPSPNSLRPSSWKRNTSLPPTGQPQSPAHVHTQASNQTTSPSKGFTGIWNPSTLSLGMPIGGSPNKEKENGSGAESPSKKKSKEIVKWPEQFYDDFKSTVWFTYRNQYAPISSLSPNLLIPSPEAYYASFGPPLDATSPSSLRVTTPTAAAQQSASGSGGWGWSKEERGLTSDAGWGCMLRTGQSLLVNALIHIHLGRDWRVPSTPASFSEATTTQEIAALKDYAKYAQMLSWFLDDPSPLCPFSVHRMALIGKELGKEVGEWFGPSTAAGALKTLANSFAPCGVAVATATDSIIYKSDVYTASNLPSDDWNSISPTFNSSKKKRRGDNEAKEEKWGKRAVLILVGVRLGLDGVNPIYYDSIKALFTFPQSVGIAGGRPSSSYYFVGSQANHLFYLDPHLTRPAIPLQIPPLPVHSAKEKGSTESSSIMSTAEEESEEGVMIRTPETPRSTTPSMFSAPEHVEDEDQEEWGQGSKYKLDVVDADGVEVEGIDDDKGRNEGKMIREEVPKSSFESNGAAQEQPKKQKGFTSTASIDSQVDSQVDPHMLWYTTAYPDPLLRTYHCEKIKKMPLSGLDPSMLLGFVCKDEDDFEDFVERVAQLPKKIFTVQDEMPSWEEDDDAGLESVSEPDFEGDEFEEPGTAKPRFDSSSPVNEDSLKGPRVVSASTTATPLAAKEEDHLDVEEANSTDDDNESIGTTTAAGPMDIARHLNRVDLSSKREQEGDDDDGEWVGGTPSSQGVLVEPPSLKGTPSKSRSSAFEPRYEQNGETEQERPVFPARNRMESWVEPVCEGKEAPNGDNLL</sequence>